<organism>
    <name type="scientific">Mus musculus</name>
    <name type="common">Mouse</name>
    <dbReference type="NCBI Taxonomy" id="10090"/>
    <lineage>
        <taxon>Eukaryota</taxon>
        <taxon>Metazoa</taxon>
        <taxon>Chordata</taxon>
        <taxon>Craniata</taxon>
        <taxon>Vertebrata</taxon>
        <taxon>Euteleostomi</taxon>
        <taxon>Mammalia</taxon>
        <taxon>Eutheria</taxon>
        <taxon>Euarchontoglires</taxon>
        <taxon>Glires</taxon>
        <taxon>Rodentia</taxon>
        <taxon>Myomorpha</taxon>
        <taxon>Muroidea</taxon>
        <taxon>Muridae</taxon>
        <taxon>Murinae</taxon>
        <taxon>Mus</taxon>
        <taxon>Mus</taxon>
    </lineage>
</organism>
<protein>
    <recommendedName>
        <fullName>Creatine kinase S-type, mitochondrial</fullName>
        <ecNumber>2.7.3.2</ecNumber>
    </recommendedName>
    <alternativeName>
        <fullName>Basic-type mitochondrial creatine kinase</fullName>
        <shortName>Mib-CK</shortName>
    </alternativeName>
    <alternativeName>
        <fullName>Sarcomeric mitochondrial creatine kinase</fullName>
        <shortName>S-MtCK</shortName>
    </alternativeName>
</protein>
<feature type="transit peptide" description="Mitochondrion">
    <location>
        <begin position="1"/>
        <end position="39"/>
    </location>
</feature>
<feature type="chain" id="PRO_0000016595" description="Creatine kinase S-type, mitochondrial">
    <location>
        <begin position="40"/>
        <end position="419"/>
    </location>
</feature>
<feature type="domain" description="Phosphagen kinase N-terminal" evidence="3">
    <location>
        <begin position="46"/>
        <end position="132"/>
    </location>
</feature>
<feature type="domain" description="Phosphagen kinase C-terminal" evidence="4">
    <location>
        <begin position="159"/>
        <end position="401"/>
    </location>
</feature>
<feature type="region of interest" description="Cardiolipin-binding" evidence="1">
    <location>
        <begin position="40"/>
        <end position="64"/>
    </location>
</feature>
<feature type="binding site" evidence="4">
    <location>
        <begin position="162"/>
        <end position="166"/>
    </location>
    <ligand>
        <name>ATP</name>
        <dbReference type="ChEBI" id="CHEBI:30616"/>
    </ligand>
</feature>
<feature type="binding site" evidence="4">
    <location>
        <position position="225"/>
    </location>
    <ligand>
        <name>ATP</name>
        <dbReference type="ChEBI" id="CHEBI:30616"/>
    </ligand>
</feature>
<feature type="binding site" evidence="4">
    <location>
        <position position="270"/>
    </location>
    <ligand>
        <name>ATP</name>
        <dbReference type="ChEBI" id="CHEBI:30616"/>
    </ligand>
</feature>
<feature type="binding site" evidence="4">
    <location>
        <position position="326"/>
    </location>
    <ligand>
        <name>ATP</name>
        <dbReference type="ChEBI" id="CHEBI:30616"/>
    </ligand>
</feature>
<feature type="binding site" evidence="4">
    <location>
        <begin position="354"/>
        <end position="359"/>
    </location>
    <ligand>
        <name>ATP</name>
        <dbReference type="ChEBI" id="CHEBI:30616"/>
    </ligand>
</feature>
<feature type="binding site" evidence="4">
    <location>
        <position position="369"/>
    </location>
    <ligand>
        <name>ATP</name>
        <dbReference type="ChEBI" id="CHEBI:30616"/>
    </ligand>
</feature>
<feature type="modified residue" description="Phosphotyrosine" evidence="2">
    <location>
        <position position="255"/>
    </location>
</feature>
<feature type="modified residue" description="Phosphothreonine" evidence="6">
    <location>
        <position position="356"/>
    </location>
</feature>
<sequence length="419" mass="47473">MASAFSKLLTGRNASLLFTTLGTSALTTGYLLNRQKVSADAREQHKLFPPSADYPDLRKHNNCMAECLTPTIYAKLRNKMTPSGYTLDQCIQTGVDNPGHPFIKTVGMVAGDEESYEVFADLFDPVIKLRHNGYDPRVMKHPTDLDASKITHGQFDERYVLSSRVRTGRSIRGLSLPPACSRAERREVENVAITALEGLKGDLAGRYYKLSEMTEQDQQRLIDDHFLFDKPVSPLLTCAGMARDWPDARGIWHNYDKTFLIWINEEDHTRVISMEKGGNMKRVFERFCRGLKEVERLIQERGWEFMWNERLGYILTCPSNLGTGLRAGVHVRIPKLSKDPRFSKILENLRLQKRGTGGVDTAAVADVYDISNIDRIGRSEVELVQIVIDGVNYLVDCEKKLERGQDIKVPPPLPQFGRK</sequence>
<accession>Q6P8J7</accession>
<dbReference type="EC" id="2.7.3.2"/>
<dbReference type="EMBL" id="BC061221">
    <property type="protein sequence ID" value="AAH61221.1"/>
    <property type="molecule type" value="mRNA"/>
</dbReference>
<dbReference type="CCDS" id="CCDS26679.1"/>
<dbReference type="RefSeq" id="NP_940807.1">
    <property type="nucleotide sequence ID" value="NM_198415.4"/>
</dbReference>
<dbReference type="SMR" id="Q6P8J7"/>
<dbReference type="BioGRID" id="218280">
    <property type="interactions" value="36"/>
</dbReference>
<dbReference type="FunCoup" id="Q6P8J7">
    <property type="interactions" value="403"/>
</dbReference>
<dbReference type="IntAct" id="Q6P8J7">
    <property type="interactions" value="3"/>
</dbReference>
<dbReference type="MINT" id="Q6P8J7"/>
<dbReference type="STRING" id="10090.ENSMUSP00000022122"/>
<dbReference type="CarbonylDB" id="Q6P8J7"/>
<dbReference type="GlyGen" id="Q6P8J7">
    <property type="glycosylation" value="1 site, 1 O-linked glycan (1 site)"/>
</dbReference>
<dbReference type="iPTMnet" id="Q6P8J7"/>
<dbReference type="PhosphoSitePlus" id="Q6P8J7"/>
<dbReference type="SwissPalm" id="Q6P8J7"/>
<dbReference type="jPOST" id="Q6P8J7"/>
<dbReference type="PaxDb" id="10090-ENSMUSP00000022122"/>
<dbReference type="PeptideAtlas" id="Q6P8J7"/>
<dbReference type="ProteomicsDB" id="263511"/>
<dbReference type="Antibodypedia" id="12782">
    <property type="antibodies" value="419 antibodies from 34 providers"/>
</dbReference>
<dbReference type="DNASU" id="76722"/>
<dbReference type="Ensembl" id="ENSMUST00000022122.4">
    <property type="protein sequence ID" value="ENSMUSP00000022122.4"/>
    <property type="gene ID" value="ENSMUSG00000021622.4"/>
</dbReference>
<dbReference type="GeneID" id="76722"/>
<dbReference type="KEGG" id="mmu:76722"/>
<dbReference type="UCSC" id="uc007rkc.1">
    <property type="organism name" value="mouse"/>
</dbReference>
<dbReference type="AGR" id="MGI:1923972"/>
<dbReference type="CTD" id="1160"/>
<dbReference type="MGI" id="MGI:1923972">
    <property type="gene designation" value="Ckmt2"/>
</dbReference>
<dbReference type="VEuPathDB" id="HostDB:ENSMUSG00000021622"/>
<dbReference type="eggNOG" id="KOG3581">
    <property type="taxonomic scope" value="Eukaryota"/>
</dbReference>
<dbReference type="GeneTree" id="ENSGT00950000182772"/>
<dbReference type="HOGENOM" id="CLU_019868_4_2_1"/>
<dbReference type="InParanoid" id="Q6P8J7"/>
<dbReference type="OMA" id="YHGQEEN"/>
<dbReference type="OrthoDB" id="430219at2759"/>
<dbReference type="PhylomeDB" id="Q6P8J7"/>
<dbReference type="TreeFam" id="TF314214"/>
<dbReference type="Reactome" id="R-MMU-71288">
    <property type="pathway name" value="Creatine metabolism"/>
</dbReference>
<dbReference type="BioGRID-ORCS" id="76722">
    <property type="hits" value="4 hits in 78 CRISPR screens"/>
</dbReference>
<dbReference type="PRO" id="PR:Q6P8J7"/>
<dbReference type="Proteomes" id="UP000000589">
    <property type="component" value="Chromosome 13"/>
</dbReference>
<dbReference type="RNAct" id="Q6P8J7">
    <property type="molecule type" value="protein"/>
</dbReference>
<dbReference type="Bgee" id="ENSMUSG00000021622">
    <property type="expression patterns" value="Expressed in plantaris and 86 other cell types or tissues"/>
</dbReference>
<dbReference type="GO" id="GO:0005743">
    <property type="term" value="C:mitochondrial inner membrane"/>
    <property type="evidence" value="ECO:0007669"/>
    <property type="project" value="UniProtKB-SubCell"/>
</dbReference>
<dbReference type="GO" id="GO:0005739">
    <property type="term" value="C:mitochondrion"/>
    <property type="evidence" value="ECO:0007005"/>
    <property type="project" value="MGI"/>
</dbReference>
<dbReference type="GO" id="GO:0005524">
    <property type="term" value="F:ATP binding"/>
    <property type="evidence" value="ECO:0007669"/>
    <property type="project" value="UniProtKB-KW"/>
</dbReference>
<dbReference type="GO" id="GO:0004111">
    <property type="term" value="F:creatine kinase activity"/>
    <property type="evidence" value="ECO:0000304"/>
    <property type="project" value="MGI"/>
</dbReference>
<dbReference type="GO" id="GO:0046314">
    <property type="term" value="P:phosphocreatine biosynthetic process"/>
    <property type="evidence" value="ECO:0007669"/>
    <property type="project" value="InterPro"/>
</dbReference>
<dbReference type="GO" id="GO:0006603">
    <property type="term" value="P:phosphocreatine metabolic process"/>
    <property type="evidence" value="ECO:0000304"/>
    <property type="project" value="MGI"/>
</dbReference>
<dbReference type="CDD" id="cd00716">
    <property type="entry name" value="creatine_kinase_like"/>
    <property type="match status" value="1"/>
</dbReference>
<dbReference type="FunFam" id="3.30.590.10:FF:000002">
    <property type="entry name" value="Creatine kinase S-type, mitochondrial"/>
    <property type="match status" value="1"/>
</dbReference>
<dbReference type="FunFam" id="1.10.135.10:FF:000002">
    <property type="entry name" value="creatine kinase S-type, mitochondrial"/>
    <property type="match status" value="1"/>
</dbReference>
<dbReference type="Gene3D" id="1.10.135.10">
    <property type="entry name" value="ATP:guanido phosphotransferase, N-terminal domain"/>
    <property type="match status" value="1"/>
</dbReference>
<dbReference type="Gene3D" id="3.30.590.10">
    <property type="entry name" value="Glutamine synthetase/guanido kinase, catalytic domain"/>
    <property type="match status" value="1"/>
</dbReference>
<dbReference type="InterPro" id="IPR000749">
    <property type="entry name" value="ATP-guanido_PTrfase"/>
</dbReference>
<dbReference type="InterPro" id="IPR022415">
    <property type="entry name" value="ATP-guanido_PTrfase_AS"/>
</dbReference>
<dbReference type="InterPro" id="IPR022414">
    <property type="entry name" value="ATP-guanido_PTrfase_cat"/>
</dbReference>
<dbReference type="InterPro" id="IPR022413">
    <property type="entry name" value="ATP-guanido_PTrfase_N"/>
</dbReference>
<dbReference type="InterPro" id="IPR036802">
    <property type="entry name" value="ATP-guanido_PTrfase_N_sf"/>
</dbReference>
<dbReference type="InterPro" id="IPR014746">
    <property type="entry name" value="Gln_synth/guanido_kin_cat_dom"/>
</dbReference>
<dbReference type="PANTHER" id="PTHR11547">
    <property type="entry name" value="ARGININE OR CREATINE KINASE"/>
    <property type="match status" value="1"/>
</dbReference>
<dbReference type="PANTHER" id="PTHR11547:SF19">
    <property type="entry name" value="CREATINE KINASE S-TYPE, MITOCHONDRIAL"/>
    <property type="match status" value="1"/>
</dbReference>
<dbReference type="Pfam" id="PF00217">
    <property type="entry name" value="ATP-gua_Ptrans"/>
    <property type="match status" value="1"/>
</dbReference>
<dbReference type="Pfam" id="PF02807">
    <property type="entry name" value="ATP-gua_PtransN"/>
    <property type="match status" value="1"/>
</dbReference>
<dbReference type="SUPFAM" id="SSF55931">
    <property type="entry name" value="Glutamine synthetase/guanido kinase"/>
    <property type="match status" value="1"/>
</dbReference>
<dbReference type="SUPFAM" id="SSF48034">
    <property type="entry name" value="Guanido kinase N-terminal domain"/>
    <property type="match status" value="1"/>
</dbReference>
<dbReference type="PROSITE" id="PS00112">
    <property type="entry name" value="PHOSPHAGEN_KINASE"/>
    <property type="match status" value="1"/>
</dbReference>
<dbReference type="PROSITE" id="PS51510">
    <property type="entry name" value="PHOSPHAGEN_KINASE_C"/>
    <property type="match status" value="1"/>
</dbReference>
<dbReference type="PROSITE" id="PS51509">
    <property type="entry name" value="PHOSPHAGEN_KINASE_N"/>
    <property type="match status" value="1"/>
</dbReference>
<comment type="function">
    <text evidence="1">Reversibly catalyzes the transfer of phosphate between ATP and various phosphogens (e.g. creatine phosphate). Creatine kinase isoenzymes play a central role in energy transduction in tissues with large, fluctuating energy demands, such as skeletal muscle, heart, brain and spermatozoa (By similarity).</text>
</comment>
<comment type="catalytic activity">
    <reaction evidence="5">
        <text>creatine + ATP = N-phosphocreatine + ADP + H(+)</text>
        <dbReference type="Rhea" id="RHEA:17157"/>
        <dbReference type="ChEBI" id="CHEBI:15378"/>
        <dbReference type="ChEBI" id="CHEBI:30616"/>
        <dbReference type="ChEBI" id="CHEBI:57947"/>
        <dbReference type="ChEBI" id="CHEBI:58092"/>
        <dbReference type="ChEBI" id="CHEBI:456216"/>
        <dbReference type="EC" id="2.7.3.2"/>
    </reaction>
</comment>
<comment type="subunit">
    <text evidence="1">Exists as an octamer composed of four CKMT2 homodimers.</text>
</comment>
<comment type="subcellular location">
    <subcellularLocation>
        <location evidence="1">Mitochondrion inner membrane</location>
        <topology evidence="1">Peripheral membrane protein</topology>
        <orientation evidence="1">Intermembrane side</orientation>
    </subcellularLocation>
</comment>
<comment type="miscellaneous">
    <text>Mitochondrial creatine kinase binds cardiolipin.</text>
</comment>
<comment type="similarity">
    <text evidence="3 4">Belongs to the ATP:guanido phosphotransferase family.</text>
</comment>
<proteinExistence type="evidence at protein level"/>
<reference key="1">
    <citation type="journal article" date="2004" name="Genome Res.">
        <title>The status, quality, and expansion of the NIH full-length cDNA project: the Mammalian Gene Collection (MGC).</title>
        <authorList>
            <consortium name="The MGC Project Team"/>
        </authorList>
    </citation>
    <scope>NUCLEOTIDE SEQUENCE [LARGE SCALE MRNA]</scope>
    <source>
        <tissue>Heart</tissue>
        <tissue>Lung</tissue>
    </source>
</reference>
<reference key="2">
    <citation type="submission" date="2009-01" db="UniProtKB">
        <authorList>
            <person name="Lubec G."/>
            <person name="Sunyer B."/>
            <person name="Chen W.-Q."/>
        </authorList>
    </citation>
    <scope>PROTEIN SEQUENCE OF 311-326</scope>
    <scope>IDENTIFICATION BY MASS SPECTROMETRY</scope>
    <source>
        <strain>OF1</strain>
        <tissue>Hippocampus</tissue>
    </source>
</reference>
<reference key="3">
    <citation type="journal article" date="2010" name="Cell">
        <title>A tissue-specific atlas of mouse protein phosphorylation and expression.</title>
        <authorList>
            <person name="Huttlin E.L."/>
            <person name="Jedrychowski M.P."/>
            <person name="Elias J.E."/>
            <person name="Goswami T."/>
            <person name="Rad R."/>
            <person name="Beausoleil S.A."/>
            <person name="Villen J."/>
            <person name="Haas W."/>
            <person name="Sowa M.E."/>
            <person name="Gygi S.P."/>
        </authorList>
    </citation>
    <scope>PHOSPHORYLATION [LARGE SCALE ANALYSIS] AT THR-356</scope>
    <scope>IDENTIFICATION BY MASS SPECTROMETRY [LARGE SCALE ANALYSIS]</scope>
    <source>
        <tissue>Brown adipose tissue</tissue>
        <tissue>Heart</tissue>
        <tissue>Kidney</tissue>
        <tissue>Lung</tissue>
    </source>
</reference>
<name>KCRS_MOUSE</name>
<evidence type="ECO:0000250" key="1"/>
<evidence type="ECO:0000250" key="2">
    <source>
        <dbReference type="UniProtKB" id="P09605"/>
    </source>
</evidence>
<evidence type="ECO:0000255" key="3">
    <source>
        <dbReference type="PROSITE-ProRule" id="PRU00842"/>
    </source>
</evidence>
<evidence type="ECO:0000255" key="4">
    <source>
        <dbReference type="PROSITE-ProRule" id="PRU00843"/>
    </source>
</evidence>
<evidence type="ECO:0000255" key="5">
    <source>
        <dbReference type="PROSITE-ProRule" id="PRU10029"/>
    </source>
</evidence>
<evidence type="ECO:0007744" key="6">
    <source>
    </source>
</evidence>
<keyword id="KW-0067">ATP-binding</keyword>
<keyword id="KW-0903">Direct protein sequencing</keyword>
<keyword id="KW-0418">Kinase</keyword>
<keyword id="KW-0472">Membrane</keyword>
<keyword id="KW-0496">Mitochondrion</keyword>
<keyword id="KW-0999">Mitochondrion inner membrane</keyword>
<keyword id="KW-0547">Nucleotide-binding</keyword>
<keyword id="KW-0597">Phosphoprotein</keyword>
<keyword id="KW-1185">Reference proteome</keyword>
<keyword id="KW-0808">Transferase</keyword>
<keyword id="KW-0809">Transit peptide</keyword>
<gene>
    <name type="primary">Ckmt2</name>
</gene>